<reference key="1">
    <citation type="journal article" date="2009" name="BMC Genomics">
        <title>Complete genome sequence of the sugarcane nitrogen-fixing endophyte Gluconacetobacter diazotrophicus Pal5.</title>
        <authorList>
            <person name="Bertalan M."/>
            <person name="Albano R."/>
            <person name="de Padua V."/>
            <person name="Rouws L."/>
            <person name="Rojas C."/>
            <person name="Hemerly A."/>
            <person name="Teixeira K."/>
            <person name="Schwab S."/>
            <person name="Araujo J."/>
            <person name="Oliveira A."/>
            <person name="Franca L."/>
            <person name="Magalhaes V."/>
            <person name="Alqueres S."/>
            <person name="Cardoso A."/>
            <person name="Almeida W."/>
            <person name="Loureiro M.M."/>
            <person name="Nogueira E."/>
            <person name="Cidade D."/>
            <person name="Oliveira D."/>
            <person name="Simao T."/>
            <person name="Macedo J."/>
            <person name="Valadao A."/>
            <person name="Dreschsel M."/>
            <person name="Freitas F."/>
            <person name="Vidal M."/>
            <person name="Guedes H."/>
            <person name="Rodrigues E."/>
            <person name="Meneses C."/>
            <person name="Brioso P."/>
            <person name="Pozzer L."/>
            <person name="Figueiredo D."/>
            <person name="Montano H."/>
            <person name="Junior J."/>
            <person name="de Souza Filho G."/>
            <person name="Martin Quintana Flores V."/>
            <person name="Ferreira B."/>
            <person name="Branco A."/>
            <person name="Gonzalez P."/>
            <person name="Guillobel H."/>
            <person name="Lemos M."/>
            <person name="Seibel L."/>
            <person name="Macedo J."/>
            <person name="Alves-Ferreira M."/>
            <person name="Sachetto-Martins G."/>
            <person name="Coelho A."/>
            <person name="Santos E."/>
            <person name="Amaral G."/>
            <person name="Neves A."/>
            <person name="Pacheco A.B."/>
            <person name="Carvalho D."/>
            <person name="Lery L."/>
            <person name="Bisch P."/>
            <person name="Rossle S.C."/>
            <person name="Urmenyi T."/>
            <person name="Rael Pereira A."/>
            <person name="Silva R."/>
            <person name="Rondinelli E."/>
            <person name="von Kruger W."/>
            <person name="Martins O."/>
            <person name="Baldani J.I."/>
            <person name="Ferreira P.C."/>
        </authorList>
    </citation>
    <scope>NUCLEOTIDE SEQUENCE [LARGE SCALE GENOMIC DNA]</scope>
    <source>
        <strain>ATCC 49037 / DSM 5601 / CCUG 37298 / CIP 103539 / LMG 7603 / PAl5</strain>
    </source>
</reference>
<reference key="2">
    <citation type="journal article" date="2010" name="Stand. Genomic Sci.">
        <title>Two genome sequences of the same bacterial strain, Gluconacetobacter diazotrophicus PAl 5, suggest a new standard in genome sequence submission.</title>
        <authorList>
            <person name="Giongo A."/>
            <person name="Tyler H.L."/>
            <person name="Zipperer U.N."/>
            <person name="Triplett E.W."/>
        </authorList>
    </citation>
    <scope>NUCLEOTIDE SEQUENCE [LARGE SCALE GENOMIC DNA]</scope>
    <source>
        <strain>ATCC 49037 / DSM 5601 / CCUG 37298 / CIP 103539 / LMG 7603 / PAl5</strain>
    </source>
</reference>
<organism>
    <name type="scientific">Gluconacetobacter diazotrophicus (strain ATCC 49037 / DSM 5601 / CCUG 37298 / CIP 103539 / LMG 7603 / PAl5)</name>
    <dbReference type="NCBI Taxonomy" id="272568"/>
    <lineage>
        <taxon>Bacteria</taxon>
        <taxon>Pseudomonadati</taxon>
        <taxon>Pseudomonadota</taxon>
        <taxon>Alphaproteobacteria</taxon>
        <taxon>Acetobacterales</taxon>
        <taxon>Acetobacteraceae</taxon>
        <taxon>Gluconacetobacter</taxon>
    </lineage>
</organism>
<gene>
    <name evidence="1" type="primary">argH</name>
    <name type="ordered locus">GDI2969</name>
    <name type="ordered locus">Gdia_3381</name>
</gene>
<accession>A9HRH6</accession>
<accession>B5ZM07</accession>
<comment type="catalytic activity">
    <reaction evidence="1">
        <text>2-(N(omega)-L-arginino)succinate = fumarate + L-arginine</text>
        <dbReference type="Rhea" id="RHEA:24020"/>
        <dbReference type="ChEBI" id="CHEBI:29806"/>
        <dbReference type="ChEBI" id="CHEBI:32682"/>
        <dbReference type="ChEBI" id="CHEBI:57472"/>
        <dbReference type="EC" id="4.3.2.1"/>
    </reaction>
</comment>
<comment type="pathway">
    <text evidence="1">Amino-acid biosynthesis; L-arginine biosynthesis; L-arginine from L-ornithine and carbamoyl phosphate: step 3/3.</text>
</comment>
<comment type="subcellular location">
    <subcellularLocation>
        <location evidence="1">Cytoplasm</location>
    </subcellularLocation>
</comment>
<comment type="similarity">
    <text evidence="1">Belongs to the lyase 1 family. Argininosuccinate lyase subfamily.</text>
</comment>
<dbReference type="EC" id="4.3.2.1" evidence="1"/>
<dbReference type="EMBL" id="AM889285">
    <property type="protein sequence ID" value="CAP56912.1"/>
    <property type="molecule type" value="Genomic_DNA"/>
</dbReference>
<dbReference type="EMBL" id="CP001189">
    <property type="protein sequence ID" value="ACI53107.1"/>
    <property type="molecule type" value="Genomic_DNA"/>
</dbReference>
<dbReference type="RefSeq" id="WP_012227217.1">
    <property type="nucleotide sequence ID" value="NC_010125.1"/>
</dbReference>
<dbReference type="RefSeq" id="WP_012554920.1">
    <property type="nucleotide sequence ID" value="NC_011365.1"/>
</dbReference>
<dbReference type="SMR" id="A9HRH6"/>
<dbReference type="STRING" id="272568.GDI2969"/>
<dbReference type="KEGG" id="gdi:GDI2969"/>
<dbReference type="KEGG" id="gdj:Gdia_3381"/>
<dbReference type="eggNOG" id="COG0165">
    <property type="taxonomic scope" value="Bacteria"/>
</dbReference>
<dbReference type="HOGENOM" id="CLU_027272_2_3_5"/>
<dbReference type="OrthoDB" id="9769623at2"/>
<dbReference type="UniPathway" id="UPA00068">
    <property type="reaction ID" value="UER00114"/>
</dbReference>
<dbReference type="Proteomes" id="UP000001176">
    <property type="component" value="Chromosome"/>
</dbReference>
<dbReference type="GO" id="GO:0005829">
    <property type="term" value="C:cytosol"/>
    <property type="evidence" value="ECO:0007669"/>
    <property type="project" value="TreeGrafter"/>
</dbReference>
<dbReference type="GO" id="GO:0004056">
    <property type="term" value="F:argininosuccinate lyase activity"/>
    <property type="evidence" value="ECO:0007669"/>
    <property type="project" value="UniProtKB-UniRule"/>
</dbReference>
<dbReference type="GO" id="GO:0042450">
    <property type="term" value="P:arginine biosynthetic process via ornithine"/>
    <property type="evidence" value="ECO:0007669"/>
    <property type="project" value="InterPro"/>
</dbReference>
<dbReference type="GO" id="GO:0006526">
    <property type="term" value="P:L-arginine biosynthetic process"/>
    <property type="evidence" value="ECO:0007669"/>
    <property type="project" value="UniProtKB-UniRule"/>
</dbReference>
<dbReference type="CDD" id="cd01359">
    <property type="entry name" value="Argininosuccinate_lyase"/>
    <property type="match status" value="1"/>
</dbReference>
<dbReference type="FunFam" id="1.10.275.10:FF:000002">
    <property type="entry name" value="Argininosuccinate lyase"/>
    <property type="match status" value="1"/>
</dbReference>
<dbReference type="FunFam" id="1.10.40.30:FF:000001">
    <property type="entry name" value="Argininosuccinate lyase"/>
    <property type="match status" value="1"/>
</dbReference>
<dbReference type="FunFam" id="1.20.200.10:FF:000015">
    <property type="entry name" value="argininosuccinate lyase isoform X2"/>
    <property type="match status" value="1"/>
</dbReference>
<dbReference type="Gene3D" id="1.10.40.30">
    <property type="entry name" value="Fumarase/aspartase (C-terminal domain)"/>
    <property type="match status" value="1"/>
</dbReference>
<dbReference type="Gene3D" id="1.20.200.10">
    <property type="entry name" value="Fumarase/aspartase (Central domain)"/>
    <property type="match status" value="1"/>
</dbReference>
<dbReference type="Gene3D" id="1.10.275.10">
    <property type="entry name" value="Fumarase/aspartase (N-terminal domain)"/>
    <property type="match status" value="1"/>
</dbReference>
<dbReference type="HAMAP" id="MF_00006">
    <property type="entry name" value="Arg_succ_lyase"/>
    <property type="match status" value="1"/>
</dbReference>
<dbReference type="InterPro" id="IPR029419">
    <property type="entry name" value="Arg_succ_lyase_C"/>
</dbReference>
<dbReference type="InterPro" id="IPR009049">
    <property type="entry name" value="Argininosuccinate_lyase"/>
</dbReference>
<dbReference type="InterPro" id="IPR024083">
    <property type="entry name" value="Fumarase/histidase_N"/>
</dbReference>
<dbReference type="InterPro" id="IPR020557">
    <property type="entry name" value="Fumarate_lyase_CS"/>
</dbReference>
<dbReference type="InterPro" id="IPR000362">
    <property type="entry name" value="Fumarate_lyase_fam"/>
</dbReference>
<dbReference type="InterPro" id="IPR022761">
    <property type="entry name" value="Fumarate_lyase_N"/>
</dbReference>
<dbReference type="InterPro" id="IPR008948">
    <property type="entry name" value="L-Aspartase-like"/>
</dbReference>
<dbReference type="NCBIfam" id="TIGR00838">
    <property type="entry name" value="argH"/>
    <property type="match status" value="1"/>
</dbReference>
<dbReference type="PANTHER" id="PTHR43814">
    <property type="entry name" value="ARGININOSUCCINATE LYASE"/>
    <property type="match status" value="1"/>
</dbReference>
<dbReference type="PANTHER" id="PTHR43814:SF1">
    <property type="entry name" value="ARGININOSUCCINATE LYASE"/>
    <property type="match status" value="1"/>
</dbReference>
<dbReference type="Pfam" id="PF14698">
    <property type="entry name" value="ASL_C2"/>
    <property type="match status" value="1"/>
</dbReference>
<dbReference type="Pfam" id="PF00206">
    <property type="entry name" value="Lyase_1"/>
    <property type="match status" value="1"/>
</dbReference>
<dbReference type="PRINTS" id="PR00145">
    <property type="entry name" value="ARGSUCLYASE"/>
</dbReference>
<dbReference type="PRINTS" id="PR00149">
    <property type="entry name" value="FUMRATELYASE"/>
</dbReference>
<dbReference type="SUPFAM" id="SSF48557">
    <property type="entry name" value="L-aspartase-like"/>
    <property type="match status" value="1"/>
</dbReference>
<dbReference type="PROSITE" id="PS00163">
    <property type="entry name" value="FUMARATE_LYASES"/>
    <property type="match status" value="1"/>
</dbReference>
<keyword id="KW-0028">Amino-acid biosynthesis</keyword>
<keyword id="KW-0055">Arginine biosynthesis</keyword>
<keyword id="KW-0963">Cytoplasm</keyword>
<keyword id="KW-0456">Lyase</keyword>
<keyword id="KW-1185">Reference proteome</keyword>
<feature type="chain" id="PRO_0000335825" description="Argininosuccinate lyase">
    <location>
        <begin position="1"/>
        <end position="476"/>
    </location>
</feature>
<feature type="sequence conflict" description="In Ref. 2; ACI53107." evidence="2" ref="2">
    <original>K</original>
    <variation>N</variation>
    <location>
        <position position="11"/>
    </location>
</feature>
<feature type="sequence conflict" description="In Ref. 2; ACI53107." evidence="2" ref="2">
    <original>E</original>
    <variation>Q</variation>
    <location>
        <position position="159"/>
    </location>
</feature>
<feature type="sequence conflict" description="In Ref. 2; ACI53107." evidence="2" ref="2">
    <original>N</original>
    <variation>T</variation>
    <location>
        <position position="474"/>
    </location>
</feature>
<protein>
    <recommendedName>
        <fullName evidence="1">Argininosuccinate lyase</fullName>
        <shortName evidence="1">ASAL</shortName>
        <ecNumber evidence="1">4.3.2.1</ecNumber>
    </recommendedName>
    <alternativeName>
        <fullName evidence="1">Arginosuccinase</fullName>
    </alternativeName>
</protein>
<evidence type="ECO:0000255" key="1">
    <source>
        <dbReference type="HAMAP-Rule" id="MF_00006"/>
    </source>
</evidence>
<evidence type="ECO:0000305" key="2"/>
<proteinExistence type="inferred from homology"/>
<name>ARLY_GLUDA</name>
<sequence length="476" mass="51137">MSVNEENGAGKDASRANAQWGGRFAGGPSAIMQDINASIGFDHVLWRQDIAGSLAHAAMLARTGIISADDEAAIRRGLTEIGAEIEAGRFDFSTALEDIHMNIEARLSDRIGEAGKRLHTARSRNDQVATDFRLWVRDAIDGLDAQAASLMRALCRRAEQHAADPMPGFTHLQTAQPVTFGHHLMAYVEMLGRDRGRLADARRRLNECPLGSAALAGTSFPIDRRMTAAALGFDRPTANSLDAVSDRDFALEYLSALSIMAMHLSRLSEEIVIWCSAPFAFVRLSDAFTTGSSIMPQKRNPDAAELVRAKIGRVTGALVGLLTVMKGLPLAYAKDMQEDKEPVFAATDAAALSLAACDGMIRDLTANTDRMRAYAGSGFSTATDLADWLVRVLKLPFRTAHHVTGRLVGLAESRGVDLSDLSLADMQAEEAGITQDIFSVLTVESSIASRTSEGGTAPDNVRAQAARWLAVLENGA</sequence>